<comment type="function">
    <text evidence="1">May protect the nitrogenase Fe-Mo protein from oxidative damage.</text>
</comment>
<comment type="subunit">
    <text evidence="1">Homotrimer; associates with NifD.</text>
</comment>
<comment type="similarity">
    <text evidence="1">Belongs to the NifW family.</text>
</comment>
<keyword id="KW-0535">Nitrogen fixation</keyword>
<keyword id="KW-1185">Reference proteome</keyword>
<dbReference type="EMBL" id="CP000230">
    <property type="protein sequence ID" value="ABC23068.1"/>
    <property type="molecule type" value="Genomic_DNA"/>
</dbReference>
<dbReference type="RefSeq" id="WP_011389923.1">
    <property type="nucleotide sequence ID" value="NC_007643.1"/>
</dbReference>
<dbReference type="RefSeq" id="YP_427355.1">
    <property type="nucleotide sequence ID" value="NC_007643.1"/>
</dbReference>
<dbReference type="SMR" id="Q2RS27"/>
<dbReference type="STRING" id="269796.Rru_A2268"/>
<dbReference type="EnsemblBacteria" id="ABC23068">
    <property type="protein sequence ID" value="ABC23068"/>
    <property type="gene ID" value="Rru_A2268"/>
</dbReference>
<dbReference type="KEGG" id="rru:Rru_A2268"/>
<dbReference type="PATRIC" id="fig|269796.9.peg.2366"/>
<dbReference type="eggNOG" id="ENOG50330W8">
    <property type="taxonomic scope" value="Bacteria"/>
</dbReference>
<dbReference type="HOGENOM" id="CLU_145318_0_0_5"/>
<dbReference type="PhylomeDB" id="Q2RS27"/>
<dbReference type="Proteomes" id="UP000001929">
    <property type="component" value="Chromosome"/>
</dbReference>
<dbReference type="GO" id="GO:0009399">
    <property type="term" value="P:nitrogen fixation"/>
    <property type="evidence" value="ECO:0007669"/>
    <property type="project" value="UniProtKB-UniRule"/>
</dbReference>
<dbReference type="HAMAP" id="MF_00529">
    <property type="entry name" value="NifW"/>
    <property type="match status" value="1"/>
</dbReference>
<dbReference type="InterPro" id="IPR004893">
    <property type="entry name" value="NifW"/>
</dbReference>
<dbReference type="Pfam" id="PF03206">
    <property type="entry name" value="NifW"/>
    <property type="match status" value="1"/>
</dbReference>
<dbReference type="PIRSF" id="PIRSF005790">
    <property type="entry name" value="NifW"/>
    <property type="match status" value="1"/>
</dbReference>
<accession>Q2RS27</accession>
<sequence>MSRFLEDLRSLSSAEEFFSFLGVEFNPKVVQVNRLHILKKYQTYLKACDAEENGESVSRETHKRCLERAYADFLTSDARSEKLFKVFQSEAGKAFVGLDAILPLAAAERSESKVNSSAEA</sequence>
<gene>
    <name evidence="1" type="primary">nifW</name>
    <name type="ordered locus">Rru_A2268</name>
</gene>
<organism>
    <name type="scientific">Rhodospirillum rubrum (strain ATCC 11170 / ATH 1.1.1 / DSM 467 / LMG 4362 / NCIMB 8255 / S1)</name>
    <dbReference type="NCBI Taxonomy" id="269796"/>
    <lineage>
        <taxon>Bacteria</taxon>
        <taxon>Pseudomonadati</taxon>
        <taxon>Pseudomonadota</taxon>
        <taxon>Alphaproteobacteria</taxon>
        <taxon>Rhodospirillales</taxon>
        <taxon>Rhodospirillaceae</taxon>
        <taxon>Rhodospirillum</taxon>
    </lineage>
</organism>
<reference key="1">
    <citation type="journal article" date="2011" name="Stand. Genomic Sci.">
        <title>Complete genome sequence of Rhodospirillum rubrum type strain (S1).</title>
        <authorList>
            <person name="Munk A.C."/>
            <person name="Copeland A."/>
            <person name="Lucas S."/>
            <person name="Lapidus A."/>
            <person name="Del Rio T.G."/>
            <person name="Barry K."/>
            <person name="Detter J.C."/>
            <person name="Hammon N."/>
            <person name="Israni S."/>
            <person name="Pitluck S."/>
            <person name="Brettin T."/>
            <person name="Bruce D."/>
            <person name="Han C."/>
            <person name="Tapia R."/>
            <person name="Gilna P."/>
            <person name="Schmutz J."/>
            <person name="Larimer F."/>
            <person name="Land M."/>
            <person name="Kyrpides N.C."/>
            <person name="Mavromatis K."/>
            <person name="Richardson P."/>
            <person name="Rohde M."/>
            <person name="Goeker M."/>
            <person name="Klenk H.P."/>
            <person name="Zhang Y."/>
            <person name="Roberts G.P."/>
            <person name="Reslewic S."/>
            <person name="Schwartz D.C."/>
        </authorList>
    </citation>
    <scope>NUCLEOTIDE SEQUENCE [LARGE SCALE GENOMIC DNA]</scope>
    <source>
        <strain>ATCC 11170 / ATH 1.1.1 / DSM 467 / LMG 4362 / NCIMB 8255 / S1</strain>
    </source>
</reference>
<evidence type="ECO:0000255" key="1">
    <source>
        <dbReference type="HAMAP-Rule" id="MF_00529"/>
    </source>
</evidence>
<feature type="chain" id="PRO_0000265757" description="Nitrogenase-stabilizing/protective protein NifW">
    <location>
        <begin position="1"/>
        <end position="120"/>
    </location>
</feature>
<protein>
    <recommendedName>
        <fullName evidence="1">Nitrogenase-stabilizing/protective protein NifW</fullName>
    </recommendedName>
</protein>
<proteinExistence type="inferred from homology"/>
<name>NIFW_RHORT</name>